<organism>
    <name type="scientific">Stutzerimonas stutzeri (strain A1501)</name>
    <name type="common">Pseudomonas stutzeri</name>
    <dbReference type="NCBI Taxonomy" id="379731"/>
    <lineage>
        <taxon>Bacteria</taxon>
        <taxon>Pseudomonadati</taxon>
        <taxon>Pseudomonadota</taxon>
        <taxon>Gammaproteobacteria</taxon>
        <taxon>Pseudomonadales</taxon>
        <taxon>Pseudomonadaceae</taxon>
        <taxon>Stutzerimonas</taxon>
    </lineage>
</organism>
<comment type="catalytic activity">
    <reaction evidence="1">
        <text>tRNA(Cys) + L-cysteine + ATP = L-cysteinyl-tRNA(Cys) + AMP + diphosphate</text>
        <dbReference type="Rhea" id="RHEA:17773"/>
        <dbReference type="Rhea" id="RHEA-COMP:9661"/>
        <dbReference type="Rhea" id="RHEA-COMP:9679"/>
        <dbReference type="ChEBI" id="CHEBI:30616"/>
        <dbReference type="ChEBI" id="CHEBI:33019"/>
        <dbReference type="ChEBI" id="CHEBI:35235"/>
        <dbReference type="ChEBI" id="CHEBI:78442"/>
        <dbReference type="ChEBI" id="CHEBI:78517"/>
        <dbReference type="ChEBI" id="CHEBI:456215"/>
        <dbReference type="EC" id="6.1.1.16"/>
    </reaction>
</comment>
<comment type="cofactor">
    <cofactor evidence="1">
        <name>Zn(2+)</name>
        <dbReference type="ChEBI" id="CHEBI:29105"/>
    </cofactor>
    <text evidence="1">Binds 1 zinc ion per subunit.</text>
</comment>
<comment type="subunit">
    <text evidence="1">Monomer.</text>
</comment>
<comment type="subcellular location">
    <subcellularLocation>
        <location evidence="1">Cytoplasm</location>
    </subcellularLocation>
</comment>
<comment type="similarity">
    <text evidence="1">Belongs to the class-I aminoacyl-tRNA synthetase family.</text>
</comment>
<comment type="sequence caution" evidence="2">
    <conflict type="erroneous initiation">
        <sequence resource="EMBL-CDS" id="ABP79724"/>
    </conflict>
</comment>
<sequence>MALAIYNTLSKAKEPFRPLEGNKVRMYVCGMTVYDFCHIGHARVMVAFDVVTRWLRHRGYDVTYVRNITDIDDKIIRRASENGEPFQALVERMIAAMHEDETRLNVLRPDVEPRATDHIAGMHTMIQTLIDKGFAYAPGNGDVYYRVGKFVGYGKLSRRKIEDLKIGARIEVDEAKEDPLDFVLWKGAKPGEPSWDSPWGPGRPGWHIECSVMSTCCLGETFDIHGGGPDLVFPHHENEIAQSEAATGKLYANAWMHAGAVRVDGEKMSKSLGNFFTIREVLEKYHPEVVRYLLVSSHYRSPINYSEDSLREAKSALERFYNGLKGLPEAQPAGGDEFVARFAAAMDDDFNSPEACAVLFEMIREVNRLREADLAAAAALAARLKVLAGVLGVLQLEPDAFLQAGAAGKVDAAEVEALIAARLAARAEKNWGESDRIRDQLTAMGVVLEDGKGGTTWRLAE</sequence>
<protein>
    <recommendedName>
        <fullName evidence="1">Cysteine--tRNA ligase</fullName>
        <ecNumber evidence="1">6.1.1.16</ecNumber>
    </recommendedName>
    <alternativeName>
        <fullName evidence="1">Cysteinyl-tRNA synthetase</fullName>
        <shortName evidence="1">CysRS</shortName>
    </alternativeName>
</protein>
<proteinExistence type="inferred from homology"/>
<evidence type="ECO:0000255" key="1">
    <source>
        <dbReference type="HAMAP-Rule" id="MF_00041"/>
    </source>
</evidence>
<evidence type="ECO:0000305" key="2"/>
<accession>A4VL73</accession>
<feature type="chain" id="PRO_0000332882" description="Cysteine--tRNA ligase">
    <location>
        <begin position="1"/>
        <end position="461"/>
    </location>
</feature>
<feature type="short sequence motif" description="'HIGH' region">
    <location>
        <begin position="31"/>
        <end position="41"/>
    </location>
</feature>
<feature type="short sequence motif" description="'KMSKS' region">
    <location>
        <begin position="267"/>
        <end position="271"/>
    </location>
</feature>
<feature type="binding site" evidence="1">
    <location>
        <position position="29"/>
    </location>
    <ligand>
        <name>Zn(2+)</name>
        <dbReference type="ChEBI" id="CHEBI:29105"/>
    </ligand>
</feature>
<feature type="binding site" evidence="1">
    <location>
        <position position="210"/>
    </location>
    <ligand>
        <name>Zn(2+)</name>
        <dbReference type="ChEBI" id="CHEBI:29105"/>
    </ligand>
</feature>
<feature type="binding site" evidence="1">
    <location>
        <position position="235"/>
    </location>
    <ligand>
        <name>Zn(2+)</name>
        <dbReference type="ChEBI" id="CHEBI:29105"/>
    </ligand>
</feature>
<feature type="binding site" evidence="1">
    <location>
        <position position="239"/>
    </location>
    <ligand>
        <name>Zn(2+)</name>
        <dbReference type="ChEBI" id="CHEBI:29105"/>
    </ligand>
</feature>
<feature type="binding site" evidence="1">
    <location>
        <position position="270"/>
    </location>
    <ligand>
        <name>ATP</name>
        <dbReference type="ChEBI" id="CHEBI:30616"/>
    </ligand>
</feature>
<dbReference type="EC" id="6.1.1.16" evidence="1"/>
<dbReference type="EMBL" id="CP000304">
    <property type="protein sequence ID" value="ABP79724.1"/>
    <property type="status" value="ALT_INIT"/>
    <property type="molecule type" value="Genomic_DNA"/>
</dbReference>
<dbReference type="RefSeq" id="WP_011913193.1">
    <property type="nucleotide sequence ID" value="NC_009434.1"/>
</dbReference>
<dbReference type="SMR" id="A4VL73"/>
<dbReference type="KEGG" id="psa:PST_2053"/>
<dbReference type="eggNOG" id="COG0215">
    <property type="taxonomic scope" value="Bacteria"/>
</dbReference>
<dbReference type="HOGENOM" id="CLU_013528_0_1_6"/>
<dbReference type="Proteomes" id="UP000000233">
    <property type="component" value="Chromosome"/>
</dbReference>
<dbReference type="GO" id="GO:0005829">
    <property type="term" value="C:cytosol"/>
    <property type="evidence" value="ECO:0007669"/>
    <property type="project" value="TreeGrafter"/>
</dbReference>
<dbReference type="GO" id="GO:0005524">
    <property type="term" value="F:ATP binding"/>
    <property type="evidence" value="ECO:0007669"/>
    <property type="project" value="UniProtKB-UniRule"/>
</dbReference>
<dbReference type="GO" id="GO:0004817">
    <property type="term" value="F:cysteine-tRNA ligase activity"/>
    <property type="evidence" value="ECO:0007669"/>
    <property type="project" value="UniProtKB-UniRule"/>
</dbReference>
<dbReference type="GO" id="GO:0008270">
    <property type="term" value="F:zinc ion binding"/>
    <property type="evidence" value="ECO:0007669"/>
    <property type="project" value="UniProtKB-UniRule"/>
</dbReference>
<dbReference type="GO" id="GO:0006423">
    <property type="term" value="P:cysteinyl-tRNA aminoacylation"/>
    <property type="evidence" value="ECO:0007669"/>
    <property type="project" value="UniProtKB-UniRule"/>
</dbReference>
<dbReference type="CDD" id="cd07963">
    <property type="entry name" value="Anticodon_Ia_Cys"/>
    <property type="match status" value="1"/>
</dbReference>
<dbReference type="CDD" id="cd00672">
    <property type="entry name" value="CysRS_core"/>
    <property type="match status" value="1"/>
</dbReference>
<dbReference type="FunFam" id="3.40.50.620:FF:000009">
    <property type="entry name" value="Cysteine--tRNA ligase"/>
    <property type="match status" value="1"/>
</dbReference>
<dbReference type="Gene3D" id="1.20.120.1910">
    <property type="entry name" value="Cysteine-tRNA ligase, C-terminal anti-codon recognition domain"/>
    <property type="match status" value="1"/>
</dbReference>
<dbReference type="Gene3D" id="3.40.50.620">
    <property type="entry name" value="HUPs"/>
    <property type="match status" value="1"/>
</dbReference>
<dbReference type="HAMAP" id="MF_00041">
    <property type="entry name" value="Cys_tRNA_synth"/>
    <property type="match status" value="1"/>
</dbReference>
<dbReference type="InterPro" id="IPR015803">
    <property type="entry name" value="Cys-tRNA-ligase"/>
</dbReference>
<dbReference type="InterPro" id="IPR015273">
    <property type="entry name" value="Cys-tRNA-synt_Ia_DALR"/>
</dbReference>
<dbReference type="InterPro" id="IPR024909">
    <property type="entry name" value="Cys-tRNA/MSH_ligase"/>
</dbReference>
<dbReference type="InterPro" id="IPR056411">
    <property type="entry name" value="CysS_C"/>
</dbReference>
<dbReference type="InterPro" id="IPR014729">
    <property type="entry name" value="Rossmann-like_a/b/a_fold"/>
</dbReference>
<dbReference type="InterPro" id="IPR032678">
    <property type="entry name" value="tRNA-synt_1_cat_dom"/>
</dbReference>
<dbReference type="InterPro" id="IPR009080">
    <property type="entry name" value="tRNAsynth_Ia_anticodon-bd"/>
</dbReference>
<dbReference type="NCBIfam" id="TIGR00435">
    <property type="entry name" value="cysS"/>
    <property type="match status" value="1"/>
</dbReference>
<dbReference type="PANTHER" id="PTHR10890:SF3">
    <property type="entry name" value="CYSTEINE--TRNA LIGASE, CYTOPLASMIC"/>
    <property type="match status" value="1"/>
</dbReference>
<dbReference type="PANTHER" id="PTHR10890">
    <property type="entry name" value="CYSTEINYL-TRNA SYNTHETASE"/>
    <property type="match status" value="1"/>
</dbReference>
<dbReference type="Pfam" id="PF23493">
    <property type="entry name" value="CysS_C"/>
    <property type="match status" value="1"/>
</dbReference>
<dbReference type="Pfam" id="PF09190">
    <property type="entry name" value="DALR_2"/>
    <property type="match status" value="1"/>
</dbReference>
<dbReference type="Pfam" id="PF01406">
    <property type="entry name" value="tRNA-synt_1e"/>
    <property type="match status" value="1"/>
</dbReference>
<dbReference type="PRINTS" id="PR00983">
    <property type="entry name" value="TRNASYNTHCYS"/>
</dbReference>
<dbReference type="SMART" id="SM00840">
    <property type="entry name" value="DALR_2"/>
    <property type="match status" value="1"/>
</dbReference>
<dbReference type="SUPFAM" id="SSF47323">
    <property type="entry name" value="Anticodon-binding domain of a subclass of class I aminoacyl-tRNA synthetases"/>
    <property type="match status" value="1"/>
</dbReference>
<dbReference type="SUPFAM" id="SSF52374">
    <property type="entry name" value="Nucleotidylyl transferase"/>
    <property type="match status" value="1"/>
</dbReference>
<reference key="1">
    <citation type="journal article" date="2008" name="Proc. Natl. Acad. Sci. U.S.A.">
        <title>Nitrogen fixation island and rhizosphere competence traits in the genome of root-associated Pseudomonas stutzeri A1501.</title>
        <authorList>
            <person name="Yan Y."/>
            <person name="Yang J."/>
            <person name="Dou Y."/>
            <person name="Chen M."/>
            <person name="Ping S."/>
            <person name="Peng J."/>
            <person name="Lu W."/>
            <person name="Zhang W."/>
            <person name="Yao Z."/>
            <person name="Li H."/>
            <person name="Liu W."/>
            <person name="He S."/>
            <person name="Geng L."/>
            <person name="Zhang X."/>
            <person name="Yang F."/>
            <person name="Yu H."/>
            <person name="Zhan Y."/>
            <person name="Li D."/>
            <person name="Lin Z."/>
            <person name="Wang Y."/>
            <person name="Elmerich C."/>
            <person name="Lin M."/>
            <person name="Jin Q."/>
        </authorList>
    </citation>
    <scope>NUCLEOTIDE SEQUENCE [LARGE SCALE GENOMIC DNA]</scope>
    <source>
        <strain>A1501</strain>
    </source>
</reference>
<gene>
    <name evidence="1" type="primary">cysS</name>
    <name type="ordered locus">PST_2053</name>
</gene>
<keyword id="KW-0030">Aminoacyl-tRNA synthetase</keyword>
<keyword id="KW-0067">ATP-binding</keyword>
<keyword id="KW-0963">Cytoplasm</keyword>
<keyword id="KW-0436">Ligase</keyword>
<keyword id="KW-0479">Metal-binding</keyword>
<keyword id="KW-0547">Nucleotide-binding</keyword>
<keyword id="KW-0648">Protein biosynthesis</keyword>
<keyword id="KW-1185">Reference proteome</keyword>
<keyword id="KW-0862">Zinc</keyword>
<name>SYC_STUS1</name>